<sequence>MPRNQGFSDPEYSAEYSAEYSVSLPSDPDRGVGRTHEISVRNSGSCLCLPRFMRLTFVPESLENLYQTYFKRQRHETLLVLVVFAALFDCYVVVMCAVVFSSDKLAPLMVAGFGLVLDIILFVLCKKGLLPDRVSRKVVPYLLWLLISAQIFSYLGLNFSRAHAASDTVGWQAFFVFSFFITLPLSLSPIVIISVVSCVVHTLVLGVTVAQQQQDELEGMQLLREILANVFLYLCAIIVGIMSYYMADRKHRKAFLEARQSLEVKMNLEEQSQQQENLMLSILPKHVADEMLKDMKKDESQKDQQQFNTMYMYRHENVSILFADIVGFTQLSSACSAQELVKLLNELFARFDKLAAKYHQLRIKILGDCYYCICGLPDYREDHAVCSILMGLAMVEAISYVREKTKTGVDMRVGVHTGTVLGGVLGQKRWQYDVWSTDVTVANKMEAGGIPGRVHISQSTMDCLKGEFDVEPGDGGSRCDYLDEKGIETYLIIASKPEVKKTAQNGLNGSAVPNGAPASSKPSSPALIETKEPNGSAHASGSTSEEAEEQEAQADNPSFPNPRRRLRLQDLADRVVDASEDEHELNQLLNEALLERESAQVVKKRNTFLLTMRFMDPEMETRYSVEKEKQSGAAFSCSCVVLFCTAMVEILIDPWLMTNYVTFVVGEVLLLILTICSMAAIFPRSFPKKLVAFSSWIDRTRWARNTWAMLAIFILVMANVVDMLSCLQYYMGPYNMTAGMELDGGCMENPKYYNYVAVLSLIATIMLVQVSHMVKLTLMLLVTGAVTALNLYAWCPVFDEYDHKRFQEKDSPMVALEKMQVLATPGLNGTDSRLPLVPSKYSMTVMMFVMMLSFYYFSRHVEKLARTLFLWKIEVHDQKERVYEMRRWNEALVTNMLPEHVARHFLGSKKRDEELYSQSYDEIGVMFASLPNFADFYTEESINNGGIECLRFLNEIISDFDSLLDNPKFRVITKIKTIGSTYMAASGVTPDVNTNGFTSSSKEEKSDKERWQHLADLADFALAMKDTLTNINNQSFNNFMLRIGMNKGGVLAGVIGARKPHYDIWGNTVNVASRMESTGVMGNIQVVEETQVILREYGFRFVRRGPIFVKGKGELLTFFLKGRDRPAAFPNGSSVTLPHQVVDNP</sequence>
<name>ADCY3_MOUSE</name>
<comment type="function">
    <text evidence="8 9 12">Catalyzes the formation of the signaling molecule cAMP in response to G-protein signaling (PubMed:11055432, PubMed:25329148, PubMed:9768837). Participates in signaling cascades triggered by odorant receptors via its function in cAMP biosynthesis: specifically activated by G alpha protein GNAL/G(olf) in olfactory epithelium (PubMed:11055432, PubMed:9768837). Required for the perception of odorants (PubMed:11055432). Required for normal sperm motility and normal male fertility (PubMed:15705663). Plays a role in regulating insulin levels and body fat accumulation in response to a high fat diet (PubMed:25329148).</text>
</comment>
<comment type="catalytic activity">
    <reaction evidence="8 10 12">
        <text>ATP = 3',5'-cyclic AMP + diphosphate</text>
        <dbReference type="Rhea" id="RHEA:15389"/>
        <dbReference type="ChEBI" id="CHEBI:30616"/>
        <dbReference type="ChEBI" id="CHEBI:33019"/>
        <dbReference type="ChEBI" id="CHEBI:58165"/>
        <dbReference type="EC" id="4.6.1.1"/>
    </reaction>
</comment>
<comment type="cofactor">
    <cofactor evidence="4">
        <name>Mg(2+)</name>
        <dbReference type="ChEBI" id="CHEBI:18420"/>
    </cofactor>
    <cofactor evidence="4">
        <name>Mn(2+)</name>
        <dbReference type="ChEBI" id="CHEBI:29035"/>
    </cofactor>
    <text evidence="4">Binds 2 magnesium ions per subunit. Is also active with manganese (in vitro).</text>
</comment>
<comment type="activity regulation">
    <text evidence="2 8 10">Specifically activated by the G alpha protein GNAL/G(olf) in signaling cascades triggered by odorant receptors (By similarity). Activated by forskolin (PubMed:11055432, PubMed:25329148). After forskolin treatment, activity is further increased by calcium/calmodulin. In the absence of forskolin, calcium/calmodulin has little effect on enzyme activity (By similarity).</text>
</comment>
<comment type="subcellular location">
    <subcellularLocation>
        <location evidence="15">Cell membrane</location>
        <topology evidence="14">Multi-pass membrane protein</topology>
    </subcellularLocation>
    <subcellularLocation>
        <location evidence="8 12">Cell projection</location>
        <location evidence="8 12">Cilium</location>
    </subcellularLocation>
    <subcellularLocation>
        <location evidence="2">Golgi apparatus</location>
    </subcellularLocation>
    <subcellularLocation>
        <location evidence="1">Cytoplasm</location>
    </subcellularLocation>
</comment>
<comment type="tissue specificity">
    <text evidence="8 9">Detected in the acrosomal region of epididymal spermatozoa, the acrosomal region of round spermatids and in elongating spermatids (PubMed:15705663). Detected in cilia in the olfactory epithelium (at protein level) (PubMed:11055432, PubMed:25908845, PubMed:9768837). Detected in olfactory epithelium neurons (PubMed:11055432). Detected in brain, testis, late pachytene spermatocytes, round spermatids and elongating spermatids (PubMed:15705663).</text>
</comment>
<comment type="domain">
    <text evidence="4">The protein contains two modules with six transmembrane helices each; both are required for catalytic activity. Isolated N-terminal or C-terminal modules have no catalytic activity, but when they are brought together, enzyme activity is restored. The active site is at the interface of the two modules.</text>
</comment>
<comment type="PTM">
    <text evidence="12">N-glycosylated.</text>
</comment>
<comment type="PTM">
    <text evidence="12">Rapidly phosphorylated after stimulation by odorants or forskolin. Phosphorylation by CaMK2 at Ser-1077 down-regulates enzyme activity.</text>
</comment>
<comment type="PTM">
    <text evidence="2 11">Sumoylated (PubMed:25908845). Sumoylation is required for targeting of olfactory cilia.</text>
</comment>
<comment type="disruption phenotype">
    <text evidence="8 9">Mutant mice are born at the expected Mendelian rate, but up to 80% of the pups die within 48 hours after birth. Survival is improved by paring down the litter size shortly after birth. Mutant mice are initially smaller than wild-type, but achieve normal size within three months. Mutant mice do not display the normal electrophysiological responses to odorants that stimulate production of cAMP or inositoltrisphosphate (IP3). Likewise, behavorial responses to smells are abolished (PubMed:11055432). In spite of normal mating behavior, they do not produce any offspring (PubMed:11055432, PubMed:15705663). Male mice have strongly reduced fertility due to defects in sperm motility, an increased rate of spontaneous acrosome reactions and an impaired ability to penetrate the oocyte zona (PubMed:15705663).</text>
</comment>
<comment type="similarity">
    <text evidence="6">Belongs to the adenylyl cyclase class-4/guanylyl cyclase family.</text>
</comment>
<protein>
    <recommendedName>
        <fullName>Adenylate cyclase type 3</fullName>
        <ecNumber evidence="8 10 12">4.6.1.1</ecNumber>
    </recommendedName>
    <alternativeName>
        <fullName>ATP pyrophosphate-lyase 3</fullName>
    </alternativeName>
    <alternativeName>
        <fullName>Adenylate cyclase type III</fullName>
        <shortName>AC-III</shortName>
    </alternativeName>
    <alternativeName>
        <fullName>Adenylate cyclase, olfactive type</fullName>
    </alternativeName>
    <alternativeName>
        <fullName>Adenylyl cyclase 3</fullName>
        <shortName evidence="13">AC3</shortName>
    </alternativeName>
</protein>
<accession>Q8VHH7</accession>
<accession>B8JK57</accession>
<keyword id="KW-0067">ATP-binding</keyword>
<keyword id="KW-0112">Calmodulin-binding</keyword>
<keyword id="KW-0115">cAMP biosynthesis</keyword>
<keyword id="KW-1003">Cell membrane</keyword>
<keyword id="KW-0966">Cell projection</keyword>
<keyword id="KW-0963">Cytoplasm</keyword>
<keyword id="KW-0325">Glycoprotein</keyword>
<keyword id="KW-0333">Golgi apparatus</keyword>
<keyword id="KW-1017">Isopeptide bond</keyword>
<keyword id="KW-0456">Lyase</keyword>
<keyword id="KW-0460">Magnesium</keyword>
<keyword id="KW-0464">Manganese</keyword>
<keyword id="KW-0472">Membrane</keyword>
<keyword id="KW-0479">Metal-binding</keyword>
<keyword id="KW-0547">Nucleotide-binding</keyword>
<keyword id="KW-0552">Olfaction</keyword>
<keyword id="KW-0597">Phosphoprotein</keyword>
<keyword id="KW-1185">Reference proteome</keyword>
<keyword id="KW-0677">Repeat</keyword>
<keyword id="KW-0716">Sensory transduction</keyword>
<keyword id="KW-0812">Transmembrane</keyword>
<keyword id="KW-1133">Transmembrane helix</keyword>
<keyword id="KW-0832">Ubl conjugation</keyword>
<evidence type="ECO:0000250" key="1">
    <source>
        <dbReference type="UniProtKB" id="O60266"/>
    </source>
</evidence>
<evidence type="ECO:0000250" key="2">
    <source>
        <dbReference type="UniProtKB" id="P21932"/>
    </source>
</evidence>
<evidence type="ECO:0000250" key="3">
    <source>
        <dbReference type="UniProtKB" id="P26769"/>
    </source>
</evidence>
<evidence type="ECO:0000250" key="4">
    <source>
        <dbReference type="UniProtKB" id="P30803"/>
    </source>
</evidence>
<evidence type="ECO:0000255" key="5"/>
<evidence type="ECO:0000255" key="6">
    <source>
        <dbReference type="PROSITE-ProRule" id="PRU00099"/>
    </source>
</evidence>
<evidence type="ECO:0000256" key="7">
    <source>
        <dbReference type="SAM" id="MobiDB-lite"/>
    </source>
</evidence>
<evidence type="ECO:0000269" key="8">
    <source>
    </source>
</evidence>
<evidence type="ECO:0000269" key="9">
    <source>
    </source>
</evidence>
<evidence type="ECO:0000269" key="10">
    <source>
    </source>
</evidence>
<evidence type="ECO:0000269" key="11">
    <source>
    </source>
</evidence>
<evidence type="ECO:0000269" key="12">
    <source>
    </source>
</evidence>
<evidence type="ECO:0000303" key="13">
    <source>
    </source>
</evidence>
<evidence type="ECO:0000305" key="14"/>
<evidence type="ECO:0000305" key="15">
    <source>
    </source>
</evidence>
<evidence type="ECO:0007744" key="16">
    <source>
    </source>
</evidence>
<proteinExistence type="evidence at protein level"/>
<dbReference type="EC" id="4.6.1.1" evidence="8 10 12"/>
<dbReference type="EMBL" id="AF458089">
    <property type="protein sequence ID" value="AAL59384.1"/>
    <property type="molecule type" value="mRNA"/>
</dbReference>
<dbReference type="EMBL" id="CT572999">
    <property type="status" value="NOT_ANNOTATED_CDS"/>
    <property type="molecule type" value="Genomic_DNA"/>
</dbReference>
<dbReference type="EMBL" id="CH466623">
    <property type="protein sequence ID" value="EDL01374.1"/>
    <property type="molecule type" value="Genomic_DNA"/>
</dbReference>
<dbReference type="CCDS" id="CCDS25787.1"/>
<dbReference type="RefSeq" id="NP_001409715.1">
    <property type="nucleotide sequence ID" value="NM_001422786.1"/>
</dbReference>
<dbReference type="RefSeq" id="NP_612178.2">
    <property type="nucleotide sequence ID" value="NM_138305.4"/>
</dbReference>
<dbReference type="RefSeq" id="XP_006514995.1">
    <property type="nucleotide sequence ID" value="XM_006514932.2"/>
</dbReference>
<dbReference type="RefSeq" id="XP_006514996.1">
    <property type="nucleotide sequence ID" value="XM_006514933.2"/>
</dbReference>
<dbReference type="RefSeq" id="XP_006514997.1">
    <property type="nucleotide sequence ID" value="XM_006514934.5"/>
</dbReference>
<dbReference type="RefSeq" id="XP_006514998.1">
    <property type="nucleotide sequence ID" value="XM_006514935.5"/>
</dbReference>
<dbReference type="SMR" id="Q8VHH7"/>
<dbReference type="BioGRID" id="222368">
    <property type="interactions" value="4"/>
</dbReference>
<dbReference type="FunCoup" id="Q8VHH7">
    <property type="interactions" value="3125"/>
</dbReference>
<dbReference type="IntAct" id="Q8VHH7">
    <property type="interactions" value="1"/>
</dbReference>
<dbReference type="MINT" id="Q8VHH7"/>
<dbReference type="STRING" id="10090.ENSMUSP00000115406"/>
<dbReference type="GlyCosmos" id="Q8VHH7">
    <property type="glycosylation" value="1 site, No reported glycans"/>
</dbReference>
<dbReference type="GlyGen" id="Q8VHH7">
    <property type="glycosylation" value="3 sites, 2 N-linked glycans (2 sites)"/>
</dbReference>
<dbReference type="iPTMnet" id="Q8VHH7"/>
<dbReference type="PhosphoSitePlus" id="Q8VHH7"/>
<dbReference type="SwissPalm" id="Q8VHH7"/>
<dbReference type="PaxDb" id="10090-ENSMUSP00000122073"/>
<dbReference type="ProteomicsDB" id="285684"/>
<dbReference type="Antibodypedia" id="4130">
    <property type="antibodies" value="152 antibodies from 25 providers"/>
</dbReference>
<dbReference type="DNASU" id="104111"/>
<dbReference type="Ensembl" id="ENSMUST00000020984.9">
    <property type="protein sequence ID" value="ENSMUSP00000020984.8"/>
    <property type="gene ID" value="ENSMUSG00000020654.16"/>
</dbReference>
<dbReference type="Ensembl" id="ENSMUST00000127756.8">
    <property type="protein sequence ID" value="ENSMUSP00000115406.2"/>
    <property type="gene ID" value="ENSMUSG00000020654.16"/>
</dbReference>
<dbReference type="GeneID" id="104111"/>
<dbReference type="KEGG" id="mmu:104111"/>
<dbReference type="UCSC" id="uc007mxm.2">
    <property type="organism name" value="mouse"/>
</dbReference>
<dbReference type="AGR" id="MGI:99675"/>
<dbReference type="CTD" id="109"/>
<dbReference type="MGI" id="MGI:99675">
    <property type="gene designation" value="Adcy3"/>
</dbReference>
<dbReference type="VEuPathDB" id="HostDB:ENSMUSG00000020654"/>
<dbReference type="eggNOG" id="KOG3619">
    <property type="taxonomic scope" value="Eukaryota"/>
</dbReference>
<dbReference type="GeneTree" id="ENSGT00940000156549"/>
<dbReference type="InParanoid" id="Q8VHH7"/>
<dbReference type="OMA" id="CVYMGLS"/>
<dbReference type="OrthoDB" id="10261550at2759"/>
<dbReference type="PhylomeDB" id="Q8VHH7"/>
<dbReference type="BRENDA" id="4.6.1.1">
    <property type="organism ID" value="3474"/>
</dbReference>
<dbReference type="Reactome" id="R-MMU-163615">
    <property type="pathway name" value="PKA activation"/>
</dbReference>
<dbReference type="Reactome" id="R-MMU-170660">
    <property type="pathway name" value="Adenylate cyclase activating pathway"/>
</dbReference>
<dbReference type="Reactome" id="R-MMU-170670">
    <property type="pathway name" value="Adenylate cyclase inhibitory pathway"/>
</dbReference>
<dbReference type="Reactome" id="R-MMU-418597">
    <property type="pathway name" value="G alpha (z) signalling events"/>
</dbReference>
<dbReference type="Reactome" id="R-MMU-5610787">
    <property type="pathway name" value="Hedgehog 'off' state"/>
</dbReference>
<dbReference type="BioGRID-ORCS" id="104111">
    <property type="hits" value="1 hit in 77 CRISPR screens"/>
</dbReference>
<dbReference type="ChiTaRS" id="Adcy3">
    <property type="organism name" value="mouse"/>
</dbReference>
<dbReference type="PRO" id="PR:Q8VHH7"/>
<dbReference type="Proteomes" id="UP000000589">
    <property type="component" value="Chromosome 12"/>
</dbReference>
<dbReference type="RNAct" id="Q8VHH7">
    <property type="molecule type" value="protein"/>
</dbReference>
<dbReference type="Bgee" id="ENSMUSG00000020654">
    <property type="expression patterns" value="Expressed in gastrula and 243 other cell types or tissues"/>
</dbReference>
<dbReference type="ExpressionAtlas" id="Q8VHH7">
    <property type="expression patterns" value="baseline and differential"/>
</dbReference>
<dbReference type="GO" id="GO:0060170">
    <property type="term" value="C:ciliary membrane"/>
    <property type="evidence" value="ECO:0000314"/>
    <property type="project" value="ARUK-UCL"/>
</dbReference>
<dbReference type="GO" id="GO:0005929">
    <property type="term" value="C:cilium"/>
    <property type="evidence" value="ECO:0000314"/>
    <property type="project" value="UniProtKB"/>
</dbReference>
<dbReference type="GO" id="GO:0005794">
    <property type="term" value="C:Golgi apparatus"/>
    <property type="evidence" value="ECO:0000250"/>
    <property type="project" value="UniProtKB"/>
</dbReference>
<dbReference type="GO" id="GO:0016020">
    <property type="term" value="C:membrane"/>
    <property type="evidence" value="ECO:0000314"/>
    <property type="project" value="UniProtKB"/>
</dbReference>
<dbReference type="GO" id="GO:0005886">
    <property type="term" value="C:plasma membrane"/>
    <property type="evidence" value="ECO:0000250"/>
    <property type="project" value="UniProtKB"/>
</dbReference>
<dbReference type="GO" id="GO:0004016">
    <property type="term" value="F:adenylate cyclase activity"/>
    <property type="evidence" value="ECO:0000315"/>
    <property type="project" value="UniProtKB"/>
</dbReference>
<dbReference type="GO" id="GO:0005524">
    <property type="term" value="F:ATP binding"/>
    <property type="evidence" value="ECO:0007669"/>
    <property type="project" value="UniProtKB-KW"/>
</dbReference>
<dbReference type="GO" id="GO:0005516">
    <property type="term" value="F:calmodulin binding"/>
    <property type="evidence" value="ECO:0007669"/>
    <property type="project" value="UniProtKB-KW"/>
</dbReference>
<dbReference type="GO" id="GO:0046872">
    <property type="term" value="F:metal ion binding"/>
    <property type="evidence" value="ECO:0007669"/>
    <property type="project" value="UniProtKB-KW"/>
</dbReference>
<dbReference type="GO" id="GO:0007340">
    <property type="term" value="P:acrosome reaction"/>
    <property type="evidence" value="ECO:0000315"/>
    <property type="project" value="UniProtKB"/>
</dbReference>
<dbReference type="GO" id="GO:0007189">
    <property type="term" value="P:adenylate cyclase-activating G protein-coupled receptor signaling pathway"/>
    <property type="evidence" value="ECO:0000315"/>
    <property type="project" value="UniProtKB"/>
</dbReference>
<dbReference type="GO" id="GO:0006171">
    <property type="term" value="P:cAMP biosynthetic process"/>
    <property type="evidence" value="ECO:0000315"/>
    <property type="project" value="UniProtKB"/>
</dbReference>
<dbReference type="GO" id="GO:1904322">
    <property type="term" value="P:cellular response to forskolin"/>
    <property type="evidence" value="ECO:0000315"/>
    <property type="project" value="UniProtKB"/>
</dbReference>
<dbReference type="GO" id="GO:0030317">
    <property type="term" value="P:flagellated sperm motility"/>
    <property type="evidence" value="ECO:0000315"/>
    <property type="project" value="UniProtKB"/>
</dbReference>
<dbReference type="GO" id="GO:0035556">
    <property type="term" value="P:intracellular signal transduction"/>
    <property type="evidence" value="ECO:0007669"/>
    <property type="project" value="InterPro"/>
</dbReference>
<dbReference type="GO" id="GO:0008355">
    <property type="term" value="P:olfactory learning"/>
    <property type="evidence" value="ECO:0000315"/>
    <property type="project" value="UniProtKB"/>
</dbReference>
<dbReference type="GO" id="GO:0007608">
    <property type="term" value="P:sensory perception of smell"/>
    <property type="evidence" value="ECO:0000314"/>
    <property type="project" value="MGI"/>
</dbReference>
<dbReference type="GO" id="GO:0007338">
    <property type="term" value="P:single fertilization"/>
    <property type="evidence" value="ECO:0000315"/>
    <property type="project" value="UniProtKB"/>
</dbReference>
<dbReference type="CDD" id="cd07302">
    <property type="entry name" value="CHD"/>
    <property type="match status" value="2"/>
</dbReference>
<dbReference type="FunFam" id="3.30.70.1230:FF:000006">
    <property type="entry name" value="Adenylate cyclase"/>
    <property type="match status" value="1"/>
</dbReference>
<dbReference type="FunFam" id="3.30.70.1230:FF:000009">
    <property type="entry name" value="Adenylate cyclase"/>
    <property type="match status" value="1"/>
</dbReference>
<dbReference type="Gene3D" id="3.30.70.1230">
    <property type="entry name" value="Nucleotide cyclase"/>
    <property type="match status" value="2"/>
</dbReference>
<dbReference type="InterPro" id="IPR001054">
    <property type="entry name" value="A/G_cyclase"/>
</dbReference>
<dbReference type="InterPro" id="IPR018297">
    <property type="entry name" value="A/G_cyclase_CS"/>
</dbReference>
<dbReference type="InterPro" id="IPR032628">
    <property type="entry name" value="AC_N"/>
</dbReference>
<dbReference type="InterPro" id="IPR030672">
    <property type="entry name" value="Adcy"/>
</dbReference>
<dbReference type="InterPro" id="IPR029787">
    <property type="entry name" value="Nucleotide_cyclase"/>
</dbReference>
<dbReference type="PANTHER" id="PTHR45627">
    <property type="entry name" value="ADENYLATE CYCLASE TYPE 1"/>
    <property type="match status" value="1"/>
</dbReference>
<dbReference type="PANTHER" id="PTHR45627:SF30">
    <property type="entry name" value="ADENYLATE CYCLASE TYPE 3"/>
    <property type="match status" value="1"/>
</dbReference>
<dbReference type="Pfam" id="PF16214">
    <property type="entry name" value="AC_N"/>
    <property type="match status" value="1"/>
</dbReference>
<dbReference type="Pfam" id="PF00211">
    <property type="entry name" value="Guanylate_cyc"/>
    <property type="match status" value="2"/>
</dbReference>
<dbReference type="PIRSF" id="PIRSF039050">
    <property type="entry name" value="Ade_cyc"/>
    <property type="match status" value="1"/>
</dbReference>
<dbReference type="SMART" id="SM00044">
    <property type="entry name" value="CYCc"/>
    <property type="match status" value="2"/>
</dbReference>
<dbReference type="SUPFAM" id="SSF55073">
    <property type="entry name" value="Nucleotide cyclase"/>
    <property type="match status" value="2"/>
</dbReference>
<dbReference type="PROSITE" id="PS00452">
    <property type="entry name" value="GUANYLATE_CYCLASE_1"/>
    <property type="match status" value="2"/>
</dbReference>
<dbReference type="PROSITE" id="PS50125">
    <property type="entry name" value="GUANYLATE_CYCLASE_2"/>
    <property type="match status" value="2"/>
</dbReference>
<organism>
    <name type="scientific">Mus musculus</name>
    <name type="common">Mouse</name>
    <dbReference type="NCBI Taxonomy" id="10090"/>
    <lineage>
        <taxon>Eukaryota</taxon>
        <taxon>Metazoa</taxon>
        <taxon>Chordata</taxon>
        <taxon>Craniata</taxon>
        <taxon>Vertebrata</taxon>
        <taxon>Euteleostomi</taxon>
        <taxon>Mammalia</taxon>
        <taxon>Eutheria</taxon>
        <taxon>Euarchontoglires</taxon>
        <taxon>Glires</taxon>
        <taxon>Rodentia</taxon>
        <taxon>Myomorpha</taxon>
        <taxon>Muroidea</taxon>
        <taxon>Muridae</taxon>
        <taxon>Murinae</taxon>
        <taxon>Mus</taxon>
        <taxon>Mus</taxon>
    </lineage>
</organism>
<gene>
    <name type="primary">Adcy3</name>
</gene>
<reference key="1">
    <citation type="submission" date="2001-12" db="EMBL/GenBank/DDBJ databases">
        <title>Sequence of mouse Adcy3.</title>
        <authorList>
            <person name="Pasternak S."/>
            <person name="Neumann P.E."/>
        </authorList>
    </citation>
    <scope>NUCLEOTIDE SEQUENCE [MRNA]</scope>
    <source>
        <strain>C57BL/6J</strain>
        <tissue>Brain</tissue>
    </source>
</reference>
<reference key="2">
    <citation type="journal article" date="2009" name="PLoS Biol.">
        <title>Lineage-specific biology revealed by a finished genome assembly of the mouse.</title>
        <authorList>
            <person name="Church D.M."/>
            <person name="Goodstadt L."/>
            <person name="Hillier L.W."/>
            <person name="Zody M.C."/>
            <person name="Goldstein S."/>
            <person name="She X."/>
            <person name="Bult C.J."/>
            <person name="Agarwala R."/>
            <person name="Cherry J.L."/>
            <person name="DiCuccio M."/>
            <person name="Hlavina W."/>
            <person name="Kapustin Y."/>
            <person name="Meric P."/>
            <person name="Maglott D."/>
            <person name="Birtle Z."/>
            <person name="Marques A.C."/>
            <person name="Graves T."/>
            <person name="Zhou S."/>
            <person name="Teague B."/>
            <person name="Potamousis K."/>
            <person name="Churas C."/>
            <person name="Place M."/>
            <person name="Herschleb J."/>
            <person name="Runnheim R."/>
            <person name="Forrest D."/>
            <person name="Amos-Landgraf J."/>
            <person name="Schwartz D.C."/>
            <person name="Cheng Z."/>
            <person name="Lindblad-Toh K."/>
            <person name="Eichler E.E."/>
            <person name="Ponting C.P."/>
        </authorList>
    </citation>
    <scope>NUCLEOTIDE SEQUENCE [LARGE SCALE GENOMIC DNA]</scope>
    <source>
        <strain>C57BL/6J</strain>
    </source>
</reference>
<reference key="3">
    <citation type="submission" date="2005-07" db="EMBL/GenBank/DDBJ databases">
        <authorList>
            <person name="Mural R.J."/>
            <person name="Adams M.D."/>
            <person name="Myers E.W."/>
            <person name="Smith H.O."/>
            <person name="Venter J.C."/>
        </authorList>
    </citation>
    <scope>NUCLEOTIDE SEQUENCE [LARGE SCALE GENOMIC DNA]</scope>
</reference>
<reference key="4">
    <citation type="journal article" date="1998" name="Neuron">
        <title>Phosphorylation and inhibition of olfactory adenylyl cyclase by CaM kinase II in neurons: a mechanism for attenuation of olfactory signals.</title>
        <authorList>
            <person name="Wei J."/>
            <person name="Zhao A.Z."/>
            <person name="Chan G.C."/>
            <person name="Baker L.P."/>
            <person name="Impey S."/>
            <person name="Beavo J.A."/>
            <person name="Storm D.R."/>
        </authorList>
    </citation>
    <scope>FUNCTION</scope>
    <scope>CATALYTIC ACTIVITY</scope>
    <scope>PHOSPHORYLATION AT SER-1077</scope>
    <scope>SUBCELLULAR LOCATION</scope>
    <scope>GLYCOSYLATION</scope>
    <scope>TISSUE SPECIFICITY</scope>
</reference>
<reference key="5">
    <citation type="journal article" date="2000" name="Neuron">
        <title>Disruption of the type III adenylyl cyclase gene leads to peripheral and behavioral anosmia in transgenic mice.</title>
        <authorList>
            <person name="Wong S.T."/>
            <person name="Trinh K."/>
            <person name="Hacker B."/>
            <person name="Chan G.C."/>
            <person name="Lowe G."/>
            <person name="Gaggar A."/>
            <person name="Xia Z."/>
            <person name="Gold G.H."/>
            <person name="Storm D.R."/>
        </authorList>
    </citation>
    <scope>DISRUPTION PHENOTYPE</scope>
    <scope>FUNCTION</scope>
    <scope>CATALYTIC ACTIVITY</scope>
    <scope>ACTIVITY REGULATION</scope>
    <scope>SUBCELLULAR LOCATION</scope>
    <scope>TISSUE SPECIFICITY</scope>
</reference>
<reference key="6">
    <citation type="journal article" date="2005" name="Mol. Endocrinol.">
        <title>Inactivation of the mouse adenylyl cyclase 3 gene disrupts male fertility and spermatozoon function.</title>
        <authorList>
            <person name="Livera G."/>
            <person name="Xie F."/>
            <person name="Garcia M.A."/>
            <person name="Jaiswal B."/>
            <person name="Chen J."/>
            <person name="Law E."/>
            <person name="Storm D.R."/>
            <person name="Conti M."/>
        </authorList>
    </citation>
    <scope>DISRUPTION PHENOTYPE</scope>
    <scope>FUNCTION</scope>
    <scope>TISSUE SPECIFICITY</scope>
</reference>
<reference key="7">
    <citation type="journal article" date="2010" name="Cell">
        <title>A tissue-specific atlas of mouse protein phosphorylation and expression.</title>
        <authorList>
            <person name="Huttlin E.L."/>
            <person name="Jedrychowski M.P."/>
            <person name="Elias J.E."/>
            <person name="Goswami T."/>
            <person name="Rad R."/>
            <person name="Beausoleil S.A."/>
            <person name="Villen J."/>
            <person name="Haas W."/>
            <person name="Sowa M.E."/>
            <person name="Gygi S.P."/>
        </authorList>
    </citation>
    <scope>PHOSPHORYLATION [LARGE SCALE ANALYSIS] AT SER-579</scope>
    <scope>IDENTIFICATION BY MASS SPECTROMETRY [LARGE SCALE ANALYSIS]</scope>
    <source>
        <tissue>Brain</tissue>
    </source>
</reference>
<reference key="8">
    <citation type="journal article" date="2014" name="PLoS ONE">
        <title>A gain-of-function mutation in adenylate cyclase 3 protects mice from diet-induced obesity.</title>
        <authorList>
            <person name="Pitman J.L."/>
            <person name="Wheeler M.C."/>
            <person name="Lloyd D.J."/>
            <person name="Walker J.R."/>
            <person name="Glynne R.J."/>
            <person name="Gekakis N."/>
        </authorList>
    </citation>
    <scope>MUTAGENESIS OF MET-279</scope>
    <scope>FUNCTION</scope>
    <scope>CATALYTIC ACTIVITY</scope>
    <scope>ACTIVITY REGULATION</scope>
</reference>
<reference key="9">
    <citation type="journal article" date="2015" name="J. Cell Sci.">
        <title>SUMOylation regulates ciliary localization of olfactory signaling proteins.</title>
        <authorList>
            <person name="McIntyre J.C."/>
            <person name="Joiner A.M."/>
            <person name="Zhang L."/>
            <person name="Iniguez-Lluhi J."/>
            <person name="Martens J.R."/>
        </authorList>
    </citation>
    <scope>SUMOYLATION</scope>
    <scope>TISSUE SPECIFICITY</scope>
</reference>
<feature type="chain" id="PRO_0000195688" description="Adenylate cyclase type 3">
    <location>
        <begin position="1"/>
        <end position="1145"/>
    </location>
</feature>
<feature type="topological domain" description="Cytoplasmic" evidence="5">
    <location>
        <begin position="1"/>
        <end position="79"/>
    </location>
</feature>
<feature type="transmembrane region" description="Helical" evidence="5">
    <location>
        <begin position="80"/>
        <end position="100"/>
    </location>
</feature>
<feature type="transmembrane region" description="Helical" evidence="5">
    <location>
        <begin position="105"/>
        <end position="125"/>
    </location>
</feature>
<feature type="transmembrane region" description="Helical" evidence="5">
    <location>
        <begin position="139"/>
        <end position="159"/>
    </location>
</feature>
<feature type="transmembrane region" description="Helical" evidence="5">
    <location>
        <begin position="173"/>
        <end position="193"/>
    </location>
</feature>
<feature type="transmembrane region" description="Helical" evidence="5">
    <location>
        <begin position="226"/>
        <end position="246"/>
    </location>
</feature>
<feature type="transmembrane region" description="Helical" evidence="5">
    <location>
        <begin position="381"/>
        <end position="401"/>
    </location>
</feature>
<feature type="topological domain" description="Cytoplasmic" evidence="5">
    <location>
        <begin position="402"/>
        <end position="631"/>
    </location>
</feature>
<feature type="transmembrane region" description="Helical" evidence="5">
    <location>
        <begin position="632"/>
        <end position="652"/>
    </location>
</feature>
<feature type="transmembrane region" description="Helical" evidence="5">
    <location>
        <begin position="663"/>
        <end position="683"/>
    </location>
</feature>
<feature type="transmembrane region" description="Helical" evidence="5">
    <location>
        <begin position="707"/>
        <end position="727"/>
    </location>
</feature>
<feature type="transmembrane region" description="Helical" evidence="5">
    <location>
        <begin position="753"/>
        <end position="773"/>
    </location>
</feature>
<feature type="transmembrane region" description="Helical" evidence="5">
    <location>
        <begin position="774"/>
        <end position="794"/>
    </location>
</feature>
<feature type="transmembrane region" description="Helical" evidence="5">
    <location>
        <begin position="834"/>
        <end position="854"/>
    </location>
</feature>
<feature type="topological domain" description="Cytoplasmic" evidence="5">
    <location>
        <begin position="855"/>
        <end position="1145"/>
    </location>
</feature>
<feature type="region of interest" description="Disordered" evidence="7">
    <location>
        <begin position="504"/>
        <end position="564"/>
    </location>
</feature>
<feature type="compositionally biased region" description="Low complexity" evidence="7">
    <location>
        <begin position="516"/>
        <end position="526"/>
    </location>
</feature>
<feature type="compositionally biased region" description="Low complexity" evidence="7">
    <location>
        <begin position="535"/>
        <end position="544"/>
    </location>
</feature>
<feature type="binding site" evidence="4">
    <location>
        <begin position="324"/>
        <end position="329"/>
    </location>
    <ligand>
        <name>ATP</name>
        <dbReference type="ChEBI" id="CHEBI:30616"/>
    </ligand>
</feature>
<feature type="binding site" evidence="6">
    <location>
        <position position="324"/>
    </location>
    <ligand>
        <name>Mg(2+)</name>
        <dbReference type="ChEBI" id="CHEBI:18420"/>
        <label>1</label>
        <note>catalytic</note>
    </ligand>
</feature>
<feature type="binding site" evidence="6">
    <location>
        <position position="324"/>
    </location>
    <ligand>
        <name>Mg(2+)</name>
        <dbReference type="ChEBI" id="CHEBI:18420"/>
        <label>2</label>
        <note>catalytic</note>
    </ligand>
</feature>
<feature type="binding site" evidence="6">
    <location>
        <position position="325"/>
    </location>
    <ligand>
        <name>Mg(2+)</name>
        <dbReference type="ChEBI" id="CHEBI:18420"/>
        <label>2</label>
        <note>catalytic</note>
    </ligand>
</feature>
<feature type="binding site" evidence="4">
    <location>
        <begin position="366"/>
        <end position="368"/>
    </location>
    <ligand>
        <name>ATP</name>
        <dbReference type="ChEBI" id="CHEBI:30616"/>
    </ligand>
</feature>
<feature type="binding site" evidence="6">
    <location>
        <position position="368"/>
    </location>
    <ligand>
        <name>Mg(2+)</name>
        <dbReference type="ChEBI" id="CHEBI:18420"/>
        <label>1</label>
        <note>catalytic</note>
    </ligand>
</feature>
<feature type="binding site" evidence="6">
    <location>
        <position position="368"/>
    </location>
    <ligand>
        <name>Mg(2+)</name>
        <dbReference type="ChEBI" id="CHEBI:18420"/>
        <label>2</label>
        <note>catalytic</note>
    </ligand>
</feature>
<feature type="binding site" evidence="4">
    <location>
        <position position="412"/>
    </location>
    <ligand>
        <name>ATP</name>
        <dbReference type="ChEBI" id="CHEBI:30616"/>
    </ligand>
</feature>
<feature type="binding site" evidence="3">
    <location>
        <position position="976"/>
    </location>
    <ligand>
        <name>ATP</name>
        <dbReference type="ChEBI" id="CHEBI:30616"/>
    </ligand>
</feature>
<feature type="binding site" evidence="3">
    <location>
        <begin position="1063"/>
        <end position="1065"/>
    </location>
    <ligand>
        <name>ATP</name>
        <dbReference type="ChEBI" id="CHEBI:30616"/>
    </ligand>
</feature>
<feature type="binding site" evidence="3">
    <location>
        <begin position="1070"/>
        <end position="1074"/>
    </location>
    <ligand>
        <name>ATP</name>
        <dbReference type="ChEBI" id="CHEBI:30616"/>
    </ligand>
</feature>
<feature type="binding site" evidence="3">
    <location>
        <position position="1110"/>
    </location>
    <ligand>
        <name>ATP</name>
        <dbReference type="ChEBI" id="CHEBI:30616"/>
    </ligand>
</feature>
<feature type="modified residue" description="Phosphoserine" evidence="1">
    <location>
        <position position="524"/>
    </location>
</feature>
<feature type="modified residue" description="Phosphoserine" evidence="16">
    <location>
        <position position="579"/>
    </location>
</feature>
<feature type="modified residue" description="Phosphoserine; by CaMK2" evidence="12">
    <location>
        <position position="1077"/>
    </location>
</feature>
<feature type="glycosylation site" description="N-linked (GlcNAc...) asparagine" evidence="5">
    <location>
        <position position="735"/>
    </location>
</feature>
<feature type="cross-link" description="Glycyl lysine isopeptide (Lys-Gly) (interchain with G-Cter in SUMO3)" evidence="2">
    <location>
        <position position="465"/>
    </location>
</feature>
<feature type="mutagenesis site" description="In Jll; dominant allele that increases enzyme activity, and decreases fasting insulin levels, fasting leptin levels, weight gain and fat accumulation when mice are kept on a high fat diet." evidence="10">
    <original>M</original>
    <variation>I</variation>
    <location>
        <position position="279"/>
    </location>
</feature>
<feature type="sequence conflict" description="In Ref. 1; AAL59384." evidence="14" ref="1">
    <original>F</original>
    <variation>L</variation>
    <location>
        <position position="152"/>
    </location>
</feature>
<feature type="sequence conflict" description="In Ref. 1; AAL59384." evidence="14" ref="1">
    <original>RLP</original>
    <variation>MLL</variation>
    <location>
        <begin position="833"/>
        <end position="835"/>
    </location>
</feature>